<organism>
    <name type="scientific">Caulobacter sp. (strain K31)</name>
    <dbReference type="NCBI Taxonomy" id="366602"/>
    <lineage>
        <taxon>Bacteria</taxon>
        <taxon>Pseudomonadati</taxon>
        <taxon>Pseudomonadota</taxon>
        <taxon>Alphaproteobacteria</taxon>
        <taxon>Caulobacterales</taxon>
        <taxon>Caulobacteraceae</taxon>
        <taxon>Caulobacter</taxon>
    </lineage>
</organism>
<protein>
    <recommendedName>
        <fullName evidence="2">tRNA (guanine-N(7)-)-methyltransferase</fullName>
        <ecNumber evidence="2">2.1.1.33</ecNumber>
    </recommendedName>
    <alternativeName>
        <fullName evidence="2">tRNA (guanine(46)-N(7))-methyltransferase</fullName>
    </alternativeName>
    <alternativeName>
        <fullName evidence="2">tRNA(m7G46)-methyltransferase</fullName>
    </alternativeName>
</protein>
<proteinExistence type="inferred from homology"/>
<feature type="chain" id="PRO_1000084437" description="tRNA (guanine-N(7)-)-methyltransferase">
    <location>
        <begin position="1"/>
        <end position="226"/>
    </location>
</feature>
<feature type="region of interest" description="Disordered" evidence="3">
    <location>
        <begin position="1"/>
        <end position="21"/>
    </location>
</feature>
<feature type="region of interest" description="Interaction with RNA" evidence="2">
    <location>
        <begin position="139"/>
        <end position="144"/>
    </location>
</feature>
<feature type="active site" evidence="1">
    <location>
        <position position="133"/>
    </location>
</feature>
<feature type="binding site" evidence="2">
    <location>
        <position position="59"/>
    </location>
    <ligand>
        <name>S-adenosyl-L-methionine</name>
        <dbReference type="ChEBI" id="CHEBI:59789"/>
    </ligand>
</feature>
<feature type="binding site" evidence="2">
    <location>
        <position position="84"/>
    </location>
    <ligand>
        <name>S-adenosyl-L-methionine</name>
        <dbReference type="ChEBI" id="CHEBI:59789"/>
    </ligand>
</feature>
<feature type="binding site" evidence="2">
    <location>
        <position position="111"/>
    </location>
    <ligand>
        <name>S-adenosyl-L-methionine</name>
        <dbReference type="ChEBI" id="CHEBI:59789"/>
    </ligand>
</feature>
<feature type="binding site" evidence="2">
    <location>
        <position position="133"/>
    </location>
    <ligand>
        <name>S-adenosyl-L-methionine</name>
        <dbReference type="ChEBI" id="CHEBI:59789"/>
    </ligand>
</feature>
<feature type="binding site" evidence="2">
    <location>
        <position position="137"/>
    </location>
    <ligand>
        <name>substrate</name>
    </ligand>
</feature>
<feature type="binding site" evidence="2">
    <location>
        <position position="169"/>
    </location>
    <ligand>
        <name>substrate</name>
    </ligand>
</feature>
<feature type="binding site" evidence="2">
    <location>
        <begin position="206"/>
        <end position="209"/>
    </location>
    <ligand>
        <name>substrate</name>
    </ligand>
</feature>
<comment type="function">
    <text evidence="2">Catalyzes the formation of N(7)-methylguanine at position 46 (m7G46) in tRNA.</text>
</comment>
<comment type="catalytic activity">
    <reaction evidence="2">
        <text>guanosine(46) in tRNA + S-adenosyl-L-methionine = N(7)-methylguanosine(46) in tRNA + S-adenosyl-L-homocysteine</text>
        <dbReference type="Rhea" id="RHEA:42708"/>
        <dbReference type="Rhea" id="RHEA-COMP:10188"/>
        <dbReference type="Rhea" id="RHEA-COMP:10189"/>
        <dbReference type="ChEBI" id="CHEBI:57856"/>
        <dbReference type="ChEBI" id="CHEBI:59789"/>
        <dbReference type="ChEBI" id="CHEBI:74269"/>
        <dbReference type="ChEBI" id="CHEBI:74480"/>
        <dbReference type="EC" id="2.1.1.33"/>
    </reaction>
</comment>
<comment type="pathway">
    <text evidence="2">tRNA modification; N(7)-methylguanine-tRNA biosynthesis.</text>
</comment>
<comment type="similarity">
    <text evidence="2">Belongs to the class I-like SAM-binding methyltransferase superfamily. TrmB family.</text>
</comment>
<name>TRMB_CAUSK</name>
<accession>B0T162</accession>
<keyword id="KW-0489">Methyltransferase</keyword>
<keyword id="KW-0949">S-adenosyl-L-methionine</keyword>
<keyword id="KW-0808">Transferase</keyword>
<keyword id="KW-0819">tRNA processing</keyword>
<dbReference type="EC" id="2.1.1.33" evidence="2"/>
<dbReference type="EMBL" id="CP000927">
    <property type="protein sequence ID" value="ABZ69166.1"/>
    <property type="molecule type" value="Genomic_DNA"/>
</dbReference>
<dbReference type="SMR" id="B0T162"/>
<dbReference type="STRING" id="366602.Caul_0028"/>
<dbReference type="KEGG" id="cak:Caul_0028"/>
<dbReference type="eggNOG" id="COG0220">
    <property type="taxonomic scope" value="Bacteria"/>
</dbReference>
<dbReference type="HOGENOM" id="CLU_050910_0_3_5"/>
<dbReference type="OrthoDB" id="9802090at2"/>
<dbReference type="UniPathway" id="UPA00989"/>
<dbReference type="GO" id="GO:0043527">
    <property type="term" value="C:tRNA methyltransferase complex"/>
    <property type="evidence" value="ECO:0007669"/>
    <property type="project" value="TreeGrafter"/>
</dbReference>
<dbReference type="GO" id="GO:0008176">
    <property type="term" value="F:tRNA (guanine(46)-N7)-methyltransferase activity"/>
    <property type="evidence" value="ECO:0007669"/>
    <property type="project" value="UniProtKB-UniRule"/>
</dbReference>
<dbReference type="CDD" id="cd02440">
    <property type="entry name" value="AdoMet_MTases"/>
    <property type="match status" value="1"/>
</dbReference>
<dbReference type="Gene3D" id="3.40.50.150">
    <property type="entry name" value="Vaccinia Virus protein VP39"/>
    <property type="match status" value="1"/>
</dbReference>
<dbReference type="HAMAP" id="MF_01057">
    <property type="entry name" value="tRNA_methyltr_TrmB"/>
    <property type="match status" value="1"/>
</dbReference>
<dbReference type="InterPro" id="IPR029063">
    <property type="entry name" value="SAM-dependent_MTases_sf"/>
</dbReference>
<dbReference type="InterPro" id="IPR003358">
    <property type="entry name" value="tRNA_(Gua-N-7)_MeTrfase_Trmb"/>
</dbReference>
<dbReference type="InterPro" id="IPR055361">
    <property type="entry name" value="tRNA_methyltr_TrmB_bact"/>
</dbReference>
<dbReference type="NCBIfam" id="TIGR00091">
    <property type="entry name" value="tRNA (guanosine(46)-N7)-methyltransferase TrmB"/>
    <property type="match status" value="1"/>
</dbReference>
<dbReference type="PANTHER" id="PTHR23417">
    <property type="entry name" value="3-DEOXY-D-MANNO-OCTULOSONIC-ACID TRANSFERASE/TRNA GUANINE-N 7 - -METHYLTRANSFERASE"/>
    <property type="match status" value="1"/>
</dbReference>
<dbReference type="PANTHER" id="PTHR23417:SF14">
    <property type="entry name" value="PENTACOTRIPEPTIDE-REPEAT REGION OF PRORP DOMAIN-CONTAINING PROTEIN"/>
    <property type="match status" value="1"/>
</dbReference>
<dbReference type="Pfam" id="PF02390">
    <property type="entry name" value="Methyltransf_4"/>
    <property type="match status" value="1"/>
</dbReference>
<dbReference type="SUPFAM" id="SSF53335">
    <property type="entry name" value="S-adenosyl-L-methionine-dependent methyltransferases"/>
    <property type="match status" value="1"/>
</dbReference>
<dbReference type="PROSITE" id="PS51625">
    <property type="entry name" value="SAM_MT_TRMB"/>
    <property type="match status" value="1"/>
</dbReference>
<gene>
    <name evidence="2" type="primary">trmB</name>
    <name type="ordered locus">Caul_0028</name>
</gene>
<reference key="1">
    <citation type="submission" date="2008-01" db="EMBL/GenBank/DDBJ databases">
        <title>Complete sequence of chromosome of Caulobacter sp. K31.</title>
        <authorList>
            <consortium name="US DOE Joint Genome Institute"/>
            <person name="Copeland A."/>
            <person name="Lucas S."/>
            <person name="Lapidus A."/>
            <person name="Barry K."/>
            <person name="Glavina del Rio T."/>
            <person name="Dalin E."/>
            <person name="Tice H."/>
            <person name="Pitluck S."/>
            <person name="Bruce D."/>
            <person name="Goodwin L."/>
            <person name="Thompson L.S."/>
            <person name="Brettin T."/>
            <person name="Detter J.C."/>
            <person name="Han C."/>
            <person name="Schmutz J."/>
            <person name="Larimer F."/>
            <person name="Land M."/>
            <person name="Hauser L."/>
            <person name="Kyrpides N."/>
            <person name="Kim E."/>
            <person name="Stephens C."/>
            <person name="Richardson P."/>
        </authorList>
    </citation>
    <scope>NUCLEOTIDE SEQUENCE [LARGE SCALE GENOMIC DNA]</scope>
    <source>
        <strain>K31</strain>
    </source>
</reference>
<sequence>MTHPQQPHGPLRSFGRLKSRPVKPRQQALLDTLLPQIAVPTAPFQPRDLMPEAQEVWLEIGFGGGEHMAAQAGKRPDVLMIGAEPFVNGVASAVRHVEEQALKNVRIHEGDARDVVGWLPDASIDRLFIMFPDPWHKARHNKRRLVQPAFVAELARVLKPGAGFRFATDWADYAQWTVERVLADPAFRFADAEAVRNAPPADHVTTRYEEKKLGDCAPVFLDFVRI</sequence>
<evidence type="ECO:0000250" key="1"/>
<evidence type="ECO:0000255" key="2">
    <source>
        <dbReference type="HAMAP-Rule" id="MF_01057"/>
    </source>
</evidence>
<evidence type="ECO:0000256" key="3">
    <source>
        <dbReference type="SAM" id="MobiDB-lite"/>
    </source>
</evidence>